<feature type="chain" id="PRO_0000313954" description="tRNA U34 carboxymethyltransferase">
    <location>
        <begin position="1"/>
        <end position="350"/>
    </location>
</feature>
<feature type="binding site" evidence="1">
    <location>
        <position position="101"/>
    </location>
    <ligand>
        <name>carboxy-S-adenosyl-L-methionine</name>
        <dbReference type="ChEBI" id="CHEBI:134278"/>
    </ligand>
</feature>
<feature type="binding site" evidence="1">
    <location>
        <position position="125"/>
    </location>
    <ligand>
        <name>carboxy-S-adenosyl-L-methionine</name>
        <dbReference type="ChEBI" id="CHEBI:134278"/>
    </ligand>
</feature>
<feature type="binding site" evidence="1">
    <location>
        <position position="130"/>
    </location>
    <ligand>
        <name>carboxy-S-adenosyl-L-methionine</name>
        <dbReference type="ChEBI" id="CHEBI:134278"/>
    </ligand>
</feature>
<feature type="binding site" evidence="1">
    <location>
        <position position="150"/>
    </location>
    <ligand>
        <name>carboxy-S-adenosyl-L-methionine</name>
        <dbReference type="ChEBI" id="CHEBI:134278"/>
    </ligand>
</feature>
<feature type="binding site" evidence="1">
    <location>
        <begin position="172"/>
        <end position="174"/>
    </location>
    <ligand>
        <name>carboxy-S-adenosyl-L-methionine</name>
        <dbReference type="ChEBI" id="CHEBI:134278"/>
    </ligand>
</feature>
<feature type="binding site" evidence="1">
    <location>
        <begin position="208"/>
        <end position="209"/>
    </location>
    <ligand>
        <name>carboxy-S-adenosyl-L-methionine</name>
        <dbReference type="ChEBI" id="CHEBI:134278"/>
    </ligand>
</feature>
<feature type="binding site" evidence="1">
    <location>
        <position position="224"/>
    </location>
    <ligand>
        <name>carboxy-S-adenosyl-L-methionine</name>
        <dbReference type="ChEBI" id="CHEBI:134278"/>
    </ligand>
</feature>
<feature type="binding site" evidence="1">
    <location>
        <position position="228"/>
    </location>
    <ligand>
        <name>carboxy-S-adenosyl-L-methionine</name>
        <dbReference type="ChEBI" id="CHEBI:134278"/>
    </ligand>
</feature>
<feature type="binding site" evidence="1">
    <location>
        <position position="343"/>
    </location>
    <ligand>
        <name>carboxy-S-adenosyl-L-methionine</name>
        <dbReference type="ChEBI" id="CHEBI:134278"/>
    </ligand>
</feature>
<gene>
    <name evidence="1" type="primary">cmoB</name>
    <name type="ordered locus">Psyc_1948</name>
</gene>
<accession>Q4FQB2</accession>
<evidence type="ECO:0000255" key="1">
    <source>
        <dbReference type="HAMAP-Rule" id="MF_01590"/>
    </source>
</evidence>
<dbReference type="EC" id="2.5.1.-" evidence="1"/>
<dbReference type="EMBL" id="CP000082">
    <property type="protein sequence ID" value="AAZ19796.1"/>
    <property type="molecule type" value="Genomic_DNA"/>
</dbReference>
<dbReference type="RefSeq" id="WP_011281205.1">
    <property type="nucleotide sequence ID" value="NC_007204.1"/>
</dbReference>
<dbReference type="SMR" id="Q4FQB2"/>
<dbReference type="STRING" id="259536.Psyc_1948"/>
<dbReference type="KEGG" id="par:Psyc_1948"/>
<dbReference type="eggNOG" id="COG2227">
    <property type="taxonomic scope" value="Bacteria"/>
</dbReference>
<dbReference type="HOGENOM" id="CLU_052665_0_0_6"/>
<dbReference type="OrthoDB" id="9773188at2"/>
<dbReference type="Proteomes" id="UP000000546">
    <property type="component" value="Chromosome"/>
</dbReference>
<dbReference type="GO" id="GO:0008168">
    <property type="term" value="F:methyltransferase activity"/>
    <property type="evidence" value="ECO:0007669"/>
    <property type="project" value="TreeGrafter"/>
</dbReference>
<dbReference type="GO" id="GO:0016765">
    <property type="term" value="F:transferase activity, transferring alkyl or aryl (other than methyl) groups"/>
    <property type="evidence" value="ECO:0007669"/>
    <property type="project" value="UniProtKB-UniRule"/>
</dbReference>
<dbReference type="GO" id="GO:0002098">
    <property type="term" value="P:tRNA wobble uridine modification"/>
    <property type="evidence" value="ECO:0007669"/>
    <property type="project" value="InterPro"/>
</dbReference>
<dbReference type="CDD" id="cd02440">
    <property type="entry name" value="AdoMet_MTases"/>
    <property type="match status" value="1"/>
</dbReference>
<dbReference type="Gene3D" id="3.40.50.150">
    <property type="entry name" value="Vaccinia Virus protein VP39"/>
    <property type="match status" value="1"/>
</dbReference>
<dbReference type="HAMAP" id="MF_01590">
    <property type="entry name" value="tRNA_carboxymethyltr_CmoB"/>
    <property type="match status" value="1"/>
</dbReference>
<dbReference type="InterPro" id="IPR010017">
    <property type="entry name" value="CmoB"/>
</dbReference>
<dbReference type="InterPro" id="IPR027555">
    <property type="entry name" value="Mo5U34_MeTrfas-like"/>
</dbReference>
<dbReference type="InterPro" id="IPR029063">
    <property type="entry name" value="SAM-dependent_MTases_sf"/>
</dbReference>
<dbReference type="NCBIfam" id="NF011650">
    <property type="entry name" value="PRK15068.1"/>
    <property type="match status" value="1"/>
</dbReference>
<dbReference type="NCBIfam" id="TIGR00452">
    <property type="entry name" value="tRNA 5-methoxyuridine(34)/uridine 5-oxyacetic acid(34) synthase CmoB"/>
    <property type="match status" value="1"/>
</dbReference>
<dbReference type="PANTHER" id="PTHR43464">
    <property type="entry name" value="METHYLTRANSFERASE"/>
    <property type="match status" value="1"/>
</dbReference>
<dbReference type="PANTHER" id="PTHR43464:SF95">
    <property type="entry name" value="TRNA U34 CARBOXYMETHYLTRANSFERASE"/>
    <property type="match status" value="1"/>
</dbReference>
<dbReference type="Pfam" id="PF08003">
    <property type="entry name" value="Methyltransf_9"/>
    <property type="match status" value="1"/>
</dbReference>
<dbReference type="SUPFAM" id="SSF53335">
    <property type="entry name" value="S-adenosyl-L-methionine-dependent methyltransferases"/>
    <property type="match status" value="1"/>
</dbReference>
<protein>
    <recommendedName>
        <fullName evidence="1">tRNA U34 carboxymethyltransferase</fullName>
        <ecNumber evidence="1">2.5.1.-</ecNumber>
    </recommendedName>
</protein>
<name>CMOB_PSYA2</name>
<sequence length="350" mass="39507">MLNNTILHAERELYLTLLAWAQQQPNAYEWLTQLPTWLNDIKDKANYAHAPAYQASVARLPTLTVDNVQLNSDILTIDAQLSDSERKQATALLKQLMPWRKGPFKIGSSQNEGEQAEPIFIDTEWHSDWKWQRVAPHLGNLKGRRVLDVGGGSGYHGWRMAGAGADTVIIIDPSCLFYHQFMAIRHFVGSADAHDIGRYRTHYIPVPLEALPDNSQLFDTVFSMGVLYHRQSPFEHLQQLKGQLVKGGELVLETLVIEGDANTVLVPHDRYAQMNNVYFLPSVAALIGWLEKAGFTEVRCVDVAVTSTDEQRKTEWMNYHSLADFLDPNDPTKTIEGYPAPMRATLIAKK</sequence>
<reference key="1">
    <citation type="journal article" date="2010" name="Appl. Environ. Microbiol.">
        <title>The genome sequence of Psychrobacter arcticus 273-4, a psychroactive Siberian permafrost bacterium, reveals mechanisms for adaptation to low-temperature growth.</title>
        <authorList>
            <person name="Ayala-del-Rio H.L."/>
            <person name="Chain P.S."/>
            <person name="Grzymski J.J."/>
            <person name="Ponder M.A."/>
            <person name="Ivanova N."/>
            <person name="Bergholz P.W."/>
            <person name="Di Bartolo G."/>
            <person name="Hauser L."/>
            <person name="Land M."/>
            <person name="Bakermans C."/>
            <person name="Rodrigues D."/>
            <person name="Klappenbach J."/>
            <person name="Zarka D."/>
            <person name="Larimer F."/>
            <person name="Richardson P."/>
            <person name="Murray A."/>
            <person name="Thomashow M."/>
            <person name="Tiedje J.M."/>
        </authorList>
    </citation>
    <scope>NUCLEOTIDE SEQUENCE [LARGE SCALE GENOMIC DNA]</scope>
    <source>
        <strain>DSM 17307 / VKM B-2377 / 273-4</strain>
    </source>
</reference>
<proteinExistence type="inferred from homology"/>
<organism>
    <name type="scientific">Psychrobacter arcticus (strain DSM 17307 / VKM B-2377 / 273-4)</name>
    <dbReference type="NCBI Taxonomy" id="259536"/>
    <lineage>
        <taxon>Bacteria</taxon>
        <taxon>Pseudomonadati</taxon>
        <taxon>Pseudomonadota</taxon>
        <taxon>Gammaproteobacteria</taxon>
        <taxon>Moraxellales</taxon>
        <taxon>Moraxellaceae</taxon>
        <taxon>Psychrobacter</taxon>
    </lineage>
</organism>
<keyword id="KW-1185">Reference proteome</keyword>
<keyword id="KW-0808">Transferase</keyword>
<keyword id="KW-0819">tRNA processing</keyword>
<comment type="function">
    <text evidence="1">Catalyzes carboxymethyl transfer from carboxy-S-adenosyl-L-methionine (Cx-SAM) to 5-hydroxyuridine (ho5U) to form 5-carboxymethoxyuridine (cmo5U) at position 34 in tRNAs.</text>
</comment>
<comment type="catalytic activity">
    <reaction evidence="1">
        <text>carboxy-S-adenosyl-L-methionine + 5-hydroxyuridine(34) in tRNA = 5-carboxymethoxyuridine(34) in tRNA + S-adenosyl-L-homocysteine + H(+)</text>
        <dbReference type="Rhea" id="RHEA:52848"/>
        <dbReference type="Rhea" id="RHEA-COMP:13381"/>
        <dbReference type="Rhea" id="RHEA-COMP:13383"/>
        <dbReference type="ChEBI" id="CHEBI:15378"/>
        <dbReference type="ChEBI" id="CHEBI:57856"/>
        <dbReference type="ChEBI" id="CHEBI:134278"/>
        <dbReference type="ChEBI" id="CHEBI:136877"/>
        <dbReference type="ChEBI" id="CHEBI:136879"/>
    </reaction>
</comment>
<comment type="subunit">
    <text evidence="1">Homotetramer.</text>
</comment>
<comment type="similarity">
    <text evidence="1">Belongs to the class I-like SAM-binding methyltransferase superfamily. CmoB family.</text>
</comment>